<organism>
    <name type="scientific">Shewanella loihica (strain ATCC BAA-1088 / PV-4)</name>
    <dbReference type="NCBI Taxonomy" id="323850"/>
    <lineage>
        <taxon>Bacteria</taxon>
        <taxon>Pseudomonadati</taxon>
        <taxon>Pseudomonadota</taxon>
        <taxon>Gammaproteobacteria</taxon>
        <taxon>Alteromonadales</taxon>
        <taxon>Shewanellaceae</taxon>
        <taxon>Shewanella</taxon>
    </lineage>
</organism>
<keyword id="KW-0963">Cytoplasm</keyword>
<keyword id="KW-0342">GTP-binding</keyword>
<keyword id="KW-0378">Hydrolase</keyword>
<keyword id="KW-0460">Magnesium</keyword>
<keyword id="KW-0479">Metal-binding</keyword>
<keyword id="KW-0547">Nucleotide-binding</keyword>
<keyword id="KW-1185">Reference proteome</keyword>
<dbReference type="EC" id="3.6.5.-" evidence="1"/>
<dbReference type="EMBL" id="CP000606">
    <property type="protein sequence ID" value="ABO22743.1"/>
    <property type="molecule type" value="Genomic_DNA"/>
</dbReference>
<dbReference type="RefSeq" id="WP_011864677.1">
    <property type="nucleotide sequence ID" value="NC_009092.1"/>
</dbReference>
<dbReference type="SMR" id="A3QB95"/>
<dbReference type="STRING" id="323850.Shew_0871"/>
<dbReference type="KEGG" id="slo:Shew_0871"/>
<dbReference type="eggNOG" id="COG0536">
    <property type="taxonomic scope" value="Bacteria"/>
</dbReference>
<dbReference type="HOGENOM" id="CLU_011747_2_0_6"/>
<dbReference type="OrthoDB" id="9807318at2"/>
<dbReference type="Proteomes" id="UP000001558">
    <property type="component" value="Chromosome"/>
</dbReference>
<dbReference type="GO" id="GO:0005737">
    <property type="term" value="C:cytoplasm"/>
    <property type="evidence" value="ECO:0007669"/>
    <property type="project" value="UniProtKB-SubCell"/>
</dbReference>
<dbReference type="GO" id="GO:0005525">
    <property type="term" value="F:GTP binding"/>
    <property type="evidence" value="ECO:0007669"/>
    <property type="project" value="UniProtKB-UniRule"/>
</dbReference>
<dbReference type="GO" id="GO:0003924">
    <property type="term" value="F:GTPase activity"/>
    <property type="evidence" value="ECO:0007669"/>
    <property type="project" value="UniProtKB-UniRule"/>
</dbReference>
<dbReference type="GO" id="GO:0000287">
    <property type="term" value="F:magnesium ion binding"/>
    <property type="evidence" value="ECO:0007669"/>
    <property type="project" value="InterPro"/>
</dbReference>
<dbReference type="GO" id="GO:0042254">
    <property type="term" value="P:ribosome biogenesis"/>
    <property type="evidence" value="ECO:0007669"/>
    <property type="project" value="UniProtKB-UniRule"/>
</dbReference>
<dbReference type="CDD" id="cd01898">
    <property type="entry name" value="Obg"/>
    <property type="match status" value="1"/>
</dbReference>
<dbReference type="FunFam" id="2.70.210.12:FF:000001">
    <property type="entry name" value="GTPase Obg"/>
    <property type="match status" value="1"/>
</dbReference>
<dbReference type="Gene3D" id="2.70.210.12">
    <property type="entry name" value="GTP1/OBG domain"/>
    <property type="match status" value="1"/>
</dbReference>
<dbReference type="Gene3D" id="3.40.50.300">
    <property type="entry name" value="P-loop containing nucleotide triphosphate hydrolases"/>
    <property type="match status" value="1"/>
</dbReference>
<dbReference type="HAMAP" id="MF_01454">
    <property type="entry name" value="GTPase_Obg"/>
    <property type="match status" value="1"/>
</dbReference>
<dbReference type="InterPro" id="IPR031167">
    <property type="entry name" value="G_OBG"/>
</dbReference>
<dbReference type="InterPro" id="IPR006073">
    <property type="entry name" value="GTP-bd"/>
</dbReference>
<dbReference type="InterPro" id="IPR014100">
    <property type="entry name" value="GTP-bd_Obg/CgtA"/>
</dbReference>
<dbReference type="InterPro" id="IPR006074">
    <property type="entry name" value="GTP1-OBG_CS"/>
</dbReference>
<dbReference type="InterPro" id="IPR006169">
    <property type="entry name" value="GTP1_OBG_dom"/>
</dbReference>
<dbReference type="InterPro" id="IPR036726">
    <property type="entry name" value="GTP1_OBG_dom_sf"/>
</dbReference>
<dbReference type="InterPro" id="IPR045086">
    <property type="entry name" value="OBG_GTPase"/>
</dbReference>
<dbReference type="InterPro" id="IPR027417">
    <property type="entry name" value="P-loop_NTPase"/>
</dbReference>
<dbReference type="NCBIfam" id="TIGR02729">
    <property type="entry name" value="Obg_CgtA"/>
    <property type="match status" value="1"/>
</dbReference>
<dbReference type="NCBIfam" id="NF008955">
    <property type="entry name" value="PRK12297.1"/>
    <property type="match status" value="1"/>
</dbReference>
<dbReference type="NCBIfam" id="NF008956">
    <property type="entry name" value="PRK12299.1"/>
    <property type="match status" value="1"/>
</dbReference>
<dbReference type="PANTHER" id="PTHR11702">
    <property type="entry name" value="DEVELOPMENTALLY REGULATED GTP-BINDING PROTEIN-RELATED"/>
    <property type="match status" value="1"/>
</dbReference>
<dbReference type="PANTHER" id="PTHR11702:SF31">
    <property type="entry name" value="MITOCHONDRIAL RIBOSOME-ASSOCIATED GTPASE 2"/>
    <property type="match status" value="1"/>
</dbReference>
<dbReference type="Pfam" id="PF01018">
    <property type="entry name" value="GTP1_OBG"/>
    <property type="match status" value="1"/>
</dbReference>
<dbReference type="Pfam" id="PF01926">
    <property type="entry name" value="MMR_HSR1"/>
    <property type="match status" value="1"/>
</dbReference>
<dbReference type="PIRSF" id="PIRSF002401">
    <property type="entry name" value="GTP_bd_Obg/CgtA"/>
    <property type="match status" value="1"/>
</dbReference>
<dbReference type="PRINTS" id="PR00326">
    <property type="entry name" value="GTP1OBG"/>
</dbReference>
<dbReference type="SUPFAM" id="SSF82051">
    <property type="entry name" value="Obg GTP-binding protein N-terminal domain"/>
    <property type="match status" value="1"/>
</dbReference>
<dbReference type="SUPFAM" id="SSF52540">
    <property type="entry name" value="P-loop containing nucleoside triphosphate hydrolases"/>
    <property type="match status" value="1"/>
</dbReference>
<dbReference type="PROSITE" id="PS51710">
    <property type="entry name" value="G_OBG"/>
    <property type="match status" value="1"/>
</dbReference>
<dbReference type="PROSITE" id="PS00905">
    <property type="entry name" value="GTP1_OBG"/>
    <property type="match status" value="1"/>
</dbReference>
<dbReference type="PROSITE" id="PS51883">
    <property type="entry name" value="OBG"/>
    <property type="match status" value="1"/>
</dbReference>
<sequence>MKFVDEAVIRVEAGDGGSGCVSFRREKYVPDGGPDGGDGGDGGSVYLQADENLNTLIDYRFERFHFAERGENGRGRDCTGHGGKDLILKVPVGTRAVDEETQEALGDLKTHGQKLLVAKGGFHGLGNTRFKSSTNRAPRQKTLGTPGEVRSLRLELMLLADVGLLGMPNAGKSTFIRSVSRAKPKVADYPFTTLVPNLGVVTPRHGQSFVIADIPGLIEGAAEGAGLGIRFLKHLERCRVLLHILDIEPIDGSDPVDSARAIVGELEKHSPLLASKPRWLVFNKTDLLLEEELQERVDRIVKELDWQGDVYCISAYNREGTQELALKLMDFIDALPPEVEEDPDAEVEFKWDNYHQKTQEVVNEDYDDDFDDDFDDDDYDVEIIYQR</sequence>
<protein>
    <recommendedName>
        <fullName evidence="1">GTPase Obg</fullName>
        <ecNumber evidence="1">3.6.5.-</ecNumber>
    </recommendedName>
    <alternativeName>
        <fullName evidence="1">GTP-binding protein Obg</fullName>
    </alternativeName>
</protein>
<proteinExistence type="inferred from homology"/>
<feature type="chain" id="PRO_0000386243" description="GTPase Obg">
    <location>
        <begin position="1"/>
        <end position="387"/>
    </location>
</feature>
<feature type="domain" description="Obg" evidence="2">
    <location>
        <begin position="1"/>
        <end position="159"/>
    </location>
</feature>
<feature type="domain" description="OBG-type G" evidence="1">
    <location>
        <begin position="160"/>
        <end position="333"/>
    </location>
</feature>
<feature type="binding site" evidence="1">
    <location>
        <begin position="166"/>
        <end position="173"/>
    </location>
    <ligand>
        <name>GTP</name>
        <dbReference type="ChEBI" id="CHEBI:37565"/>
    </ligand>
</feature>
<feature type="binding site" evidence="1">
    <location>
        <position position="173"/>
    </location>
    <ligand>
        <name>Mg(2+)</name>
        <dbReference type="ChEBI" id="CHEBI:18420"/>
    </ligand>
</feature>
<feature type="binding site" evidence="1">
    <location>
        <begin position="191"/>
        <end position="195"/>
    </location>
    <ligand>
        <name>GTP</name>
        <dbReference type="ChEBI" id="CHEBI:37565"/>
    </ligand>
</feature>
<feature type="binding site" evidence="1">
    <location>
        <position position="193"/>
    </location>
    <ligand>
        <name>Mg(2+)</name>
        <dbReference type="ChEBI" id="CHEBI:18420"/>
    </ligand>
</feature>
<feature type="binding site" evidence="1">
    <location>
        <begin position="213"/>
        <end position="216"/>
    </location>
    <ligand>
        <name>GTP</name>
        <dbReference type="ChEBI" id="CHEBI:37565"/>
    </ligand>
</feature>
<feature type="binding site" evidence="1">
    <location>
        <begin position="283"/>
        <end position="286"/>
    </location>
    <ligand>
        <name>GTP</name>
        <dbReference type="ChEBI" id="CHEBI:37565"/>
    </ligand>
</feature>
<feature type="binding site" evidence="1">
    <location>
        <begin position="314"/>
        <end position="316"/>
    </location>
    <ligand>
        <name>GTP</name>
        <dbReference type="ChEBI" id="CHEBI:37565"/>
    </ligand>
</feature>
<name>OBG_SHELP</name>
<comment type="function">
    <text evidence="1">An essential GTPase which binds GTP, GDP and possibly (p)ppGpp with moderate affinity, with high nucleotide exchange rates and a fairly low GTP hydrolysis rate. Plays a role in control of the cell cycle, stress response, ribosome biogenesis and in those bacteria that undergo differentiation, in morphogenesis control.</text>
</comment>
<comment type="cofactor">
    <cofactor evidence="1">
        <name>Mg(2+)</name>
        <dbReference type="ChEBI" id="CHEBI:18420"/>
    </cofactor>
</comment>
<comment type="subunit">
    <text evidence="1">Monomer.</text>
</comment>
<comment type="subcellular location">
    <subcellularLocation>
        <location evidence="1">Cytoplasm</location>
    </subcellularLocation>
</comment>
<comment type="similarity">
    <text evidence="1">Belongs to the TRAFAC class OBG-HflX-like GTPase superfamily. OBG GTPase family.</text>
</comment>
<evidence type="ECO:0000255" key="1">
    <source>
        <dbReference type="HAMAP-Rule" id="MF_01454"/>
    </source>
</evidence>
<evidence type="ECO:0000255" key="2">
    <source>
        <dbReference type="PROSITE-ProRule" id="PRU01231"/>
    </source>
</evidence>
<accession>A3QB95</accession>
<reference key="1">
    <citation type="submission" date="2007-03" db="EMBL/GenBank/DDBJ databases">
        <title>Complete sequence of Shewanella loihica PV-4.</title>
        <authorList>
            <consortium name="US DOE Joint Genome Institute"/>
            <person name="Copeland A."/>
            <person name="Lucas S."/>
            <person name="Lapidus A."/>
            <person name="Barry K."/>
            <person name="Detter J.C."/>
            <person name="Glavina del Rio T."/>
            <person name="Hammon N."/>
            <person name="Israni S."/>
            <person name="Dalin E."/>
            <person name="Tice H."/>
            <person name="Pitluck S."/>
            <person name="Chain P."/>
            <person name="Malfatti S."/>
            <person name="Shin M."/>
            <person name="Vergez L."/>
            <person name="Schmutz J."/>
            <person name="Larimer F."/>
            <person name="Land M."/>
            <person name="Hauser L."/>
            <person name="Kyrpides N."/>
            <person name="Mikhailova N."/>
            <person name="Romine M.F."/>
            <person name="Serres G."/>
            <person name="Fredrickson J."/>
            <person name="Tiedje J."/>
            <person name="Richardson P."/>
        </authorList>
    </citation>
    <scope>NUCLEOTIDE SEQUENCE [LARGE SCALE GENOMIC DNA]</scope>
    <source>
        <strain>ATCC BAA-1088 / PV-4</strain>
    </source>
</reference>
<gene>
    <name evidence="1" type="primary">obg</name>
    <name type="ordered locus">Shew_0871</name>
</gene>